<reference key="1">
    <citation type="journal article" date="2010" name="Genome Biol.">
        <title>Structure and dynamics of the pan-genome of Streptococcus pneumoniae and closely related species.</title>
        <authorList>
            <person name="Donati C."/>
            <person name="Hiller N.L."/>
            <person name="Tettelin H."/>
            <person name="Muzzi A."/>
            <person name="Croucher N.J."/>
            <person name="Angiuoli S.V."/>
            <person name="Oggioni M."/>
            <person name="Dunning Hotopp J.C."/>
            <person name="Hu F.Z."/>
            <person name="Riley D.R."/>
            <person name="Covacci A."/>
            <person name="Mitchell T.J."/>
            <person name="Bentley S.D."/>
            <person name="Kilian M."/>
            <person name="Ehrlich G.D."/>
            <person name="Rappuoli R."/>
            <person name="Moxon E.R."/>
            <person name="Masignani V."/>
        </authorList>
    </citation>
    <scope>NUCLEOTIDE SEQUENCE [LARGE SCALE GENOMIC DNA]</scope>
    <source>
        <strain>JJA</strain>
    </source>
</reference>
<proteinExistence type="inferred from homology"/>
<organism>
    <name type="scientific">Streptococcus pneumoniae (strain JJA)</name>
    <dbReference type="NCBI Taxonomy" id="488222"/>
    <lineage>
        <taxon>Bacteria</taxon>
        <taxon>Bacillati</taxon>
        <taxon>Bacillota</taxon>
        <taxon>Bacilli</taxon>
        <taxon>Lactobacillales</taxon>
        <taxon>Streptococcaceae</taxon>
        <taxon>Streptococcus</taxon>
    </lineage>
</organism>
<comment type="function">
    <text evidence="1">Involved in unsaturated fatty acids biosynthesis. Catalyzes the dehydration of short chain beta-hydroxyacyl-ACPs and long chain saturated and unsaturated beta-hydroxyacyl-ACPs.</text>
</comment>
<comment type="catalytic activity">
    <reaction evidence="1">
        <text>a (3R)-hydroxyacyl-[ACP] = a (2E)-enoyl-[ACP] + H2O</text>
        <dbReference type="Rhea" id="RHEA:13097"/>
        <dbReference type="Rhea" id="RHEA-COMP:9925"/>
        <dbReference type="Rhea" id="RHEA-COMP:9945"/>
        <dbReference type="ChEBI" id="CHEBI:15377"/>
        <dbReference type="ChEBI" id="CHEBI:78784"/>
        <dbReference type="ChEBI" id="CHEBI:78827"/>
        <dbReference type="EC" id="4.2.1.59"/>
    </reaction>
</comment>
<comment type="subcellular location">
    <subcellularLocation>
        <location evidence="1">Cytoplasm</location>
    </subcellularLocation>
</comment>
<comment type="similarity">
    <text evidence="1">Belongs to the thioester dehydratase family. FabZ subfamily.</text>
</comment>
<protein>
    <recommendedName>
        <fullName evidence="1">3-hydroxyacyl-[acyl-carrier-protein] dehydratase FabZ</fullName>
        <ecNumber evidence="1">4.2.1.59</ecNumber>
    </recommendedName>
    <alternativeName>
        <fullName evidence="1">(3R)-hydroxymyristoyl-[acyl-carrier-protein] dehydratase</fullName>
        <shortName evidence="1">(3R)-hydroxymyristoyl-ACP dehydrase</shortName>
    </alternativeName>
    <alternativeName>
        <fullName evidence="1">Beta-hydroxyacyl-ACP dehydratase</fullName>
    </alternativeName>
</protein>
<name>FABZ_STRZJ</name>
<feature type="chain" id="PRO_1000134716" description="3-hydroxyacyl-[acyl-carrier-protein] dehydratase FabZ">
    <location>
        <begin position="1"/>
        <end position="140"/>
    </location>
</feature>
<feature type="active site" evidence="1">
    <location>
        <position position="47"/>
    </location>
</feature>
<keyword id="KW-0963">Cytoplasm</keyword>
<keyword id="KW-0441">Lipid A biosynthesis</keyword>
<keyword id="KW-0444">Lipid biosynthesis</keyword>
<keyword id="KW-0443">Lipid metabolism</keyword>
<keyword id="KW-0456">Lyase</keyword>
<accession>C1CCI9</accession>
<sequence>MIDIQGIKEALPHRYPMLLVDRVLEVSEDTIVAIKNVTINEPFFNGHFPQYPVMPGVLIMEALAQTAGVLELSKPENKGKLVFYAGMDKVKFKKQVVPGDQLVMTATFVKRRGTIAVVEAKAEVDGKLAASGILTFAIGN</sequence>
<gene>
    <name evidence="1" type="primary">fabZ</name>
    <name type="ordered locus">SPJ_0410</name>
</gene>
<evidence type="ECO:0000255" key="1">
    <source>
        <dbReference type="HAMAP-Rule" id="MF_00406"/>
    </source>
</evidence>
<dbReference type="EC" id="4.2.1.59" evidence="1"/>
<dbReference type="EMBL" id="CP000919">
    <property type="protein sequence ID" value="ACO18192.1"/>
    <property type="molecule type" value="Genomic_DNA"/>
</dbReference>
<dbReference type="RefSeq" id="WP_000565514.1">
    <property type="nucleotide sequence ID" value="NC_012466.1"/>
</dbReference>
<dbReference type="SMR" id="C1CCI9"/>
<dbReference type="GeneID" id="45652122"/>
<dbReference type="KEGG" id="sjj:SPJ_0410"/>
<dbReference type="HOGENOM" id="CLU_078912_3_0_9"/>
<dbReference type="Proteomes" id="UP000002206">
    <property type="component" value="Chromosome"/>
</dbReference>
<dbReference type="GO" id="GO:0005737">
    <property type="term" value="C:cytoplasm"/>
    <property type="evidence" value="ECO:0007669"/>
    <property type="project" value="UniProtKB-SubCell"/>
</dbReference>
<dbReference type="GO" id="GO:0016020">
    <property type="term" value="C:membrane"/>
    <property type="evidence" value="ECO:0007669"/>
    <property type="project" value="GOC"/>
</dbReference>
<dbReference type="GO" id="GO:0019171">
    <property type="term" value="F:(3R)-hydroxyacyl-[acyl-carrier-protein] dehydratase activity"/>
    <property type="evidence" value="ECO:0007669"/>
    <property type="project" value="UniProtKB-EC"/>
</dbReference>
<dbReference type="GO" id="GO:0006633">
    <property type="term" value="P:fatty acid biosynthetic process"/>
    <property type="evidence" value="ECO:0007669"/>
    <property type="project" value="UniProtKB-UniRule"/>
</dbReference>
<dbReference type="GO" id="GO:0009245">
    <property type="term" value="P:lipid A biosynthetic process"/>
    <property type="evidence" value="ECO:0007669"/>
    <property type="project" value="UniProtKB-UniRule"/>
</dbReference>
<dbReference type="CDD" id="cd01288">
    <property type="entry name" value="FabZ"/>
    <property type="match status" value="1"/>
</dbReference>
<dbReference type="FunFam" id="3.10.129.10:FF:000001">
    <property type="entry name" value="3-hydroxyacyl-[acyl-carrier-protein] dehydratase FabZ"/>
    <property type="match status" value="1"/>
</dbReference>
<dbReference type="Gene3D" id="3.10.129.10">
    <property type="entry name" value="Hotdog Thioesterase"/>
    <property type="match status" value="1"/>
</dbReference>
<dbReference type="HAMAP" id="MF_00406">
    <property type="entry name" value="FabZ"/>
    <property type="match status" value="1"/>
</dbReference>
<dbReference type="InterPro" id="IPR013114">
    <property type="entry name" value="FabA_FabZ"/>
</dbReference>
<dbReference type="InterPro" id="IPR010084">
    <property type="entry name" value="FabZ"/>
</dbReference>
<dbReference type="InterPro" id="IPR029069">
    <property type="entry name" value="HotDog_dom_sf"/>
</dbReference>
<dbReference type="NCBIfam" id="TIGR01750">
    <property type="entry name" value="fabZ"/>
    <property type="match status" value="1"/>
</dbReference>
<dbReference type="NCBIfam" id="NF000582">
    <property type="entry name" value="PRK00006.1"/>
    <property type="match status" value="1"/>
</dbReference>
<dbReference type="PANTHER" id="PTHR30272">
    <property type="entry name" value="3-HYDROXYACYL-[ACYL-CARRIER-PROTEIN] DEHYDRATASE"/>
    <property type="match status" value="1"/>
</dbReference>
<dbReference type="PANTHER" id="PTHR30272:SF1">
    <property type="entry name" value="3-HYDROXYACYL-[ACYL-CARRIER-PROTEIN] DEHYDRATASE"/>
    <property type="match status" value="1"/>
</dbReference>
<dbReference type="Pfam" id="PF07977">
    <property type="entry name" value="FabA"/>
    <property type="match status" value="1"/>
</dbReference>
<dbReference type="SUPFAM" id="SSF54637">
    <property type="entry name" value="Thioesterase/thiol ester dehydrase-isomerase"/>
    <property type="match status" value="1"/>
</dbReference>